<keyword id="KW-0002">3D-structure</keyword>
<keyword id="KW-0249">Electron transport</keyword>
<keyword id="KW-0285">Flavoprotein</keyword>
<keyword id="KW-0288">FMN</keyword>
<keyword id="KW-0408">Iron</keyword>
<keyword id="KW-0479">Metal-binding</keyword>
<keyword id="KW-0560">Oxidoreductase</keyword>
<keyword id="KW-0813">Transport</keyword>
<gene>
    <name type="primary">roo</name>
</gene>
<reference key="1">
    <citation type="journal article" date="1997" name="J. Biol. Chem.">
        <title>Studies on the redox centers of the terminal oxidase from Desulfovibrio gigas and evidence for its interaction with rubredoxin.</title>
        <authorList>
            <person name="Gomes C.M."/>
            <person name="Silva G."/>
            <person name="Oliveira S."/>
            <person name="LeGall J."/>
            <person name="Liu M.-Y."/>
            <person name="Xavier A.V."/>
            <person name="Rodrigues-Pousada C."/>
            <person name="Teixeira M."/>
        </authorList>
    </citation>
    <scope>NUCLEOTIDE SEQUENCE [GENOMIC DNA]</scope>
    <source>
        <strain>ATCC 19364 / DSM 1382 / NCIMB 9332 / VKM B-1759</strain>
    </source>
</reference>
<reference key="2">
    <citation type="journal article" date="1993" name="Biochem. Biophys. Res. Commun.">
        <title>Rubredoxin oxidase, a new flavo-hemo-protein, is the site of oxygen reduction to water by the 'strict anaerobe' Desulfovibrio gigas.</title>
        <authorList>
            <person name="Chen L."/>
            <person name="Liu M.-Y."/>
            <person name="LeGall J."/>
            <person name="Fareleira P."/>
            <person name="Santos H."/>
            <person name="Xavier A.V."/>
        </authorList>
    </citation>
    <scope>COFACTOR</scope>
    <scope>SUBUNIT</scope>
    <source>
        <strain>ATCC 19364 / DSM 1382 / NCIMB 9332 / VKM B-1759</strain>
    </source>
</reference>
<reference key="3">
    <citation type="journal article" date="2000" name="Nat. Struct. Biol.">
        <title>Structure of a dioxygen reduction enzyme from Desulfovibrio gigas.</title>
        <authorList>
            <person name="Frazao C."/>
            <person name="Silva G."/>
            <person name="Gomes C.M."/>
            <person name="Matias P."/>
            <person name="Coelho R."/>
            <person name="Sieker L."/>
            <person name="Macedo S."/>
            <person name="Liu M.-Y."/>
            <person name="Oliveira S."/>
            <person name="Teixeira M."/>
            <person name="Xavier A.V."/>
            <person name="Rodrigues-Pousada C."/>
            <person name="Carrondo M.A."/>
            <person name="Le Gall J."/>
        </authorList>
    </citation>
    <scope>X-RAY CRYSTALLOGRAPHY (2.5 ANGSTROMS)</scope>
    <source>
        <strain>ATCC 19364 / DSM 1382 / NCIMB 9332 / VKM B-1759</strain>
    </source>
</reference>
<feature type="chain" id="PRO_0000216792" description="Rubredoxin-oxygen oxidoreductase">
    <location>
        <begin position="1"/>
        <end position="402"/>
    </location>
</feature>
<feature type="domain" description="Flavodoxin-like" evidence="1">
    <location>
        <begin position="255"/>
        <end position="393"/>
    </location>
</feature>
<feature type="region of interest" description="Zinc metallo-hydrolase">
    <location>
        <begin position="30"/>
        <end position="216"/>
    </location>
</feature>
<feature type="binding site">
    <location>
        <position position="79"/>
    </location>
    <ligand>
        <name>Fe cation</name>
        <dbReference type="ChEBI" id="CHEBI:24875"/>
        <label>1</label>
    </ligand>
</feature>
<feature type="binding site">
    <location>
        <position position="81"/>
    </location>
    <ligand>
        <name>Fe cation</name>
        <dbReference type="ChEBI" id="CHEBI:24875"/>
        <label>1</label>
    </ligand>
</feature>
<feature type="binding site">
    <location>
        <position position="83"/>
    </location>
    <ligand>
        <name>Fe cation</name>
        <dbReference type="ChEBI" id="CHEBI:24875"/>
        <label>2</label>
    </ligand>
</feature>
<feature type="binding site">
    <location>
        <position position="146"/>
    </location>
    <ligand>
        <name>Fe cation</name>
        <dbReference type="ChEBI" id="CHEBI:24875"/>
        <label>1</label>
    </ligand>
</feature>
<feature type="binding site">
    <location>
        <position position="165"/>
    </location>
    <ligand>
        <name>Fe cation</name>
        <dbReference type="ChEBI" id="CHEBI:24875"/>
        <label>1</label>
    </ligand>
</feature>
<feature type="binding site">
    <location>
        <position position="165"/>
    </location>
    <ligand>
        <name>Fe cation</name>
        <dbReference type="ChEBI" id="CHEBI:24875"/>
        <label>2</label>
    </ligand>
</feature>
<feature type="binding site">
    <location>
        <position position="226"/>
    </location>
    <ligand>
        <name>Fe cation</name>
        <dbReference type="ChEBI" id="CHEBI:24875"/>
        <label>2</label>
    </ligand>
</feature>
<feature type="strand" evidence="4">
    <location>
        <begin position="4"/>
        <end position="7"/>
    </location>
</feature>
<feature type="strand" evidence="4">
    <location>
        <begin position="10"/>
        <end position="17"/>
    </location>
</feature>
<feature type="turn" evidence="4">
    <location>
        <begin position="24"/>
        <end position="26"/>
    </location>
</feature>
<feature type="strand" evidence="4">
    <location>
        <begin position="33"/>
        <end position="40"/>
    </location>
</feature>
<feature type="strand" evidence="4">
    <location>
        <begin position="42"/>
        <end position="44"/>
    </location>
</feature>
<feature type="strand" evidence="4">
    <location>
        <begin position="46"/>
        <end position="48"/>
    </location>
</feature>
<feature type="helix" evidence="4">
    <location>
        <begin position="53"/>
        <end position="55"/>
    </location>
</feature>
<feature type="helix" evidence="4">
    <location>
        <begin position="56"/>
        <end position="64"/>
    </location>
</feature>
<feature type="helix" evidence="4">
    <location>
        <begin position="69"/>
        <end position="71"/>
    </location>
</feature>
<feature type="strand" evidence="4">
    <location>
        <begin position="74"/>
        <end position="77"/>
    </location>
</feature>
<feature type="helix" evidence="4">
    <location>
        <begin position="82"/>
        <end position="85"/>
    </location>
</feature>
<feature type="helix" evidence="4">
    <location>
        <begin position="88"/>
        <end position="95"/>
    </location>
</feature>
<feature type="strand" evidence="4">
    <location>
        <begin position="98"/>
        <end position="103"/>
    </location>
</feature>
<feature type="helix" evidence="4">
    <location>
        <begin position="104"/>
        <end position="114"/>
    </location>
</feature>
<feature type="strand" evidence="4">
    <location>
        <begin position="121"/>
        <end position="124"/>
    </location>
</feature>
<feature type="strand" evidence="4">
    <location>
        <begin position="129"/>
        <end position="131"/>
    </location>
</feature>
<feature type="strand" evidence="4">
    <location>
        <begin position="136"/>
        <end position="141"/>
    </location>
</feature>
<feature type="strand" evidence="4">
    <location>
        <begin position="145"/>
        <end position="147"/>
    </location>
</feature>
<feature type="strand" evidence="4">
    <location>
        <begin position="151"/>
        <end position="155"/>
    </location>
</feature>
<feature type="turn" evidence="4">
    <location>
        <begin position="156"/>
        <end position="159"/>
    </location>
</feature>
<feature type="strand" evidence="4">
    <location>
        <begin position="160"/>
        <end position="164"/>
    </location>
</feature>
<feature type="turn" evidence="4">
    <location>
        <begin position="165"/>
        <end position="167"/>
    </location>
</feature>
<feature type="helix" evidence="4">
    <location>
        <begin position="178"/>
        <end position="180"/>
    </location>
</feature>
<feature type="helix" evidence="4">
    <location>
        <begin position="183"/>
        <end position="197"/>
    </location>
</feature>
<feature type="helix" evidence="4">
    <location>
        <begin position="199"/>
        <end position="201"/>
    </location>
</feature>
<feature type="helix" evidence="4">
    <location>
        <begin position="202"/>
        <end position="214"/>
    </location>
</feature>
<feature type="strand" evidence="4">
    <location>
        <begin position="220"/>
        <end position="227"/>
    </location>
</feature>
<feature type="strand" evidence="4">
    <location>
        <begin position="229"/>
        <end position="232"/>
    </location>
</feature>
<feature type="helix" evidence="4">
    <location>
        <begin position="233"/>
        <end position="248"/>
    </location>
</feature>
<feature type="strand" evidence="4">
    <location>
        <begin position="253"/>
        <end position="259"/>
    </location>
</feature>
<feature type="strand" evidence="4">
    <location>
        <begin position="262"/>
        <end position="264"/>
    </location>
</feature>
<feature type="helix" evidence="4">
    <location>
        <begin position="265"/>
        <end position="279"/>
    </location>
</feature>
<feature type="strand" evidence="4">
    <location>
        <begin position="283"/>
        <end position="288"/>
    </location>
</feature>
<feature type="turn" evidence="4">
    <location>
        <begin position="289"/>
        <end position="291"/>
    </location>
</feature>
<feature type="helix" evidence="4">
    <location>
        <begin position="294"/>
        <end position="302"/>
    </location>
</feature>
<feature type="strand" evidence="4">
    <location>
        <begin position="305"/>
        <end position="310"/>
    </location>
</feature>
<feature type="helix" evidence="4">
    <location>
        <begin position="320"/>
        <end position="331"/>
    </location>
</feature>
<feature type="strand" evidence="4">
    <location>
        <begin position="338"/>
        <end position="348"/>
    </location>
</feature>
<feature type="helix" evidence="4">
    <location>
        <begin position="350"/>
        <end position="361"/>
    </location>
</feature>
<feature type="strand" evidence="4">
    <location>
        <begin position="371"/>
        <end position="376"/>
    </location>
</feature>
<feature type="helix" evidence="4">
    <location>
        <begin position="379"/>
        <end position="400"/>
    </location>
</feature>
<comment type="function">
    <text>Catalyzes the four-electron reduction of one oxygen molecule to two water molecules.</text>
</comment>
<comment type="cofactor">
    <cofactor evidence="2">
        <name>FMN</name>
        <dbReference type="ChEBI" id="CHEBI:58210"/>
    </cofactor>
    <text evidence="2">Binds 1 FMN per monomer.</text>
</comment>
<comment type="cofactor">
    <cofactor evidence="2">
        <name>Fe cation</name>
        <dbReference type="ChEBI" id="CHEBI:24875"/>
    </cofactor>
    <text evidence="2">Binds 2 iron ions per monomer.</text>
</comment>
<comment type="pathway">
    <text>Energy metabolism; electron transfer.</text>
</comment>
<comment type="subunit">
    <text evidence="2">Homodimer.</text>
</comment>
<comment type="similarity">
    <text evidence="3">In the N-terminal section; belongs to the zinc metallo-hydrolase group 3 family.</text>
</comment>
<proteinExistence type="evidence at protein level"/>
<organism>
    <name type="scientific">Megalodesulfovibrio gigas (strain ATCC 19364 / DSM 1382 / NCIMB 9332 / VKM B-1759)</name>
    <name type="common">Desulfovibrio gigas</name>
    <dbReference type="NCBI Taxonomy" id="1121448"/>
    <lineage>
        <taxon>Bacteria</taxon>
        <taxon>Pseudomonadati</taxon>
        <taxon>Thermodesulfobacteriota</taxon>
        <taxon>Desulfovibrionia</taxon>
        <taxon>Desulfovibrionales</taxon>
        <taxon>Desulfovibrionaceae</taxon>
        <taxon>Megalodesulfovibrio</taxon>
    </lineage>
</organism>
<protein>
    <recommendedName>
        <fullName>Rubredoxin-oxygen oxidoreductase</fullName>
        <shortName>ROO</shortName>
        <shortName>Rubredoxin oxidase</shortName>
        <ecNumber>1.-.-.-</ecNumber>
    </recommendedName>
</protein>
<accession>Q9F0J6</accession>
<sequence>MQATKIIDGFHLVGAIDWNSRDFHGYTLSPMGTTYNAYLVEDEKTTLFDTVKAEYKGELLCGIASVIDPKKIDYLVIQHLELDHAGALPALIEACQPEKIFTSSLGQKAMESHFHYKDWPVQVVKHGETLSLGKRTVTFYETRMLHWPDSMVSWFADEKVLISNDIFGQNIAASERFSDQIPVHTLERAMREYYANIVNPYAPQTLKAIETLVGAGVAPEFICPDHGVIFRGADQCTFAVQKYVEYAEQKPTNKVVIFYDSMWHSTEKMARVLAESFRDEGCTVKLMWCKACHHSQIMSEISDAGAVIVGSPTHNNGILPYVAGTLQYIKGLRPQNKIGGAFGSFGWSGESTKVLAEWLTGMGFDMPATPVKVKNVPTHADYEQLKTMAQTIARALKAKLAA</sequence>
<dbReference type="EC" id="1.-.-.-"/>
<dbReference type="EMBL" id="AF218053">
    <property type="protein sequence ID" value="AAG34792.1"/>
    <property type="molecule type" value="Genomic_DNA"/>
</dbReference>
<dbReference type="RefSeq" id="WP_021760300.1">
    <property type="nucleotide sequence ID" value="NC_022444.1"/>
</dbReference>
<dbReference type="PDB" id="1E5D">
    <property type="method" value="X-ray"/>
    <property type="resolution" value="2.50 A"/>
    <property type="chains" value="A/B=1-402"/>
</dbReference>
<dbReference type="PDBsum" id="1E5D"/>
<dbReference type="SMR" id="Q9F0J6"/>
<dbReference type="STRING" id="1121448.DGI_1622"/>
<dbReference type="DrugBank" id="DB03247">
    <property type="generic name" value="Flavin mononucleotide"/>
</dbReference>
<dbReference type="OrthoDB" id="9800607at2"/>
<dbReference type="UniPathway" id="UPA00092"/>
<dbReference type="EvolutionaryTrace" id="Q9F0J6"/>
<dbReference type="GO" id="GO:0009055">
    <property type="term" value="F:electron transfer activity"/>
    <property type="evidence" value="ECO:0007669"/>
    <property type="project" value="InterPro"/>
</dbReference>
<dbReference type="GO" id="GO:0010181">
    <property type="term" value="F:FMN binding"/>
    <property type="evidence" value="ECO:0007669"/>
    <property type="project" value="InterPro"/>
</dbReference>
<dbReference type="GO" id="GO:0046872">
    <property type="term" value="F:metal ion binding"/>
    <property type="evidence" value="ECO:0007669"/>
    <property type="project" value="UniProtKB-KW"/>
</dbReference>
<dbReference type="GO" id="GO:0016491">
    <property type="term" value="F:oxidoreductase activity"/>
    <property type="evidence" value="ECO:0007669"/>
    <property type="project" value="UniProtKB-KW"/>
</dbReference>
<dbReference type="GO" id="GO:0022904">
    <property type="term" value="P:respiratory electron transport chain"/>
    <property type="evidence" value="ECO:0007669"/>
    <property type="project" value="UniProtKB-UniPathway"/>
</dbReference>
<dbReference type="CDD" id="cd07709">
    <property type="entry name" value="flavodiiron_proteins_MBL-fold"/>
    <property type="match status" value="1"/>
</dbReference>
<dbReference type="Gene3D" id="3.40.50.360">
    <property type="match status" value="1"/>
</dbReference>
<dbReference type="Gene3D" id="3.60.15.10">
    <property type="entry name" value="Ribonuclease Z/Hydroxyacylglutathione hydrolase-like"/>
    <property type="match status" value="1"/>
</dbReference>
<dbReference type="InterPro" id="IPR008254">
    <property type="entry name" value="Flavodoxin/NO_synth"/>
</dbReference>
<dbReference type="InterPro" id="IPR029039">
    <property type="entry name" value="Flavoprotein-like_sf"/>
</dbReference>
<dbReference type="InterPro" id="IPR001279">
    <property type="entry name" value="Metallo-B-lactamas"/>
</dbReference>
<dbReference type="InterPro" id="IPR045761">
    <property type="entry name" value="ODP_dom"/>
</dbReference>
<dbReference type="InterPro" id="IPR036866">
    <property type="entry name" value="RibonucZ/Hydroxyglut_hydro"/>
</dbReference>
<dbReference type="InterPro" id="IPR016440">
    <property type="entry name" value="Rubredoxin-O_OxRdtase"/>
</dbReference>
<dbReference type="PANTHER" id="PTHR43717">
    <property type="entry name" value="ANAEROBIC NITRIC OXIDE REDUCTASE FLAVORUBREDOXIN"/>
    <property type="match status" value="1"/>
</dbReference>
<dbReference type="PANTHER" id="PTHR43717:SF1">
    <property type="entry name" value="ANAEROBIC NITRIC OXIDE REDUCTASE FLAVORUBREDOXIN"/>
    <property type="match status" value="1"/>
</dbReference>
<dbReference type="Pfam" id="PF00258">
    <property type="entry name" value="Flavodoxin_1"/>
    <property type="match status" value="1"/>
</dbReference>
<dbReference type="Pfam" id="PF19583">
    <property type="entry name" value="ODP"/>
    <property type="match status" value="1"/>
</dbReference>
<dbReference type="PIRSF" id="PIRSF005243">
    <property type="entry name" value="ROO"/>
    <property type="match status" value="1"/>
</dbReference>
<dbReference type="SMART" id="SM00849">
    <property type="entry name" value="Lactamase_B"/>
    <property type="match status" value="1"/>
</dbReference>
<dbReference type="SUPFAM" id="SSF52218">
    <property type="entry name" value="Flavoproteins"/>
    <property type="match status" value="1"/>
</dbReference>
<dbReference type="SUPFAM" id="SSF56281">
    <property type="entry name" value="Metallo-hydrolase/oxidoreductase"/>
    <property type="match status" value="1"/>
</dbReference>
<dbReference type="PROSITE" id="PS50902">
    <property type="entry name" value="FLAVODOXIN_LIKE"/>
    <property type="match status" value="1"/>
</dbReference>
<name>ROO_MEGG1</name>
<evidence type="ECO:0000255" key="1">
    <source>
        <dbReference type="PROSITE-ProRule" id="PRU00088"/>
    </source>
</evidence>
<evidence type="ECO:0000269" key="2">
    <source>
    </source>
</evidence>
<evidence type="ECO:0000305" key="3"/>
<evidence type="ECO:0007829" key="4">
    <source>
        <dbReference type="PDB" id="1E5D"/>
    </source>
</evidence>